<dbReference type="EC" id="6.1.1.20"/>
<dbReference type="EMBL" id="V00291">
    <property type="protein sequence ID" value="CAA23565.1"/>
    <property type="molecule type" value="Genomic_DNA"/>
</dbReference>
<dbReference type="EMBL" id="K02844">
    <property type="protein sequence ID" value="AAA51470.1"/>
    <property type="molecule type" value="Genomic_DNA"/>
</dbReference>
<dbReference type="EMBL" id="U00096">
    <property type="protein sequence ID" value="AAC74783.1"/>
    <property type="molecule type" value="Genomic_DNA"/>
</dbReference>
<dbReference type="EMBL" id="AP009048">
    <property type="protein sequence ID" value="BAA15481.1"/>
    <property type="molecule type" value="Genomic_DNA"/>
</dbReference>
<dbReference type="PIR" id="I41284">
    <property type="entry name" value="SYECFB"/>
</dbReference>
<dbReference type="RefSeq" id="NP_416228.1">
    <property type="nucleotide sequence ID" value="NC_000913.3"/>
</dbReference>
<dbReference type="RefSeq" id="WP_000672380.1">
    <property type="nucleotide sequence ID" value="NZ_SSZK01000001.1"/>
</dbReference>
<dbReference type="PDB" id="3PCO">
    <property type="method" value="X-ray"/>
    <property type="resolution" value="3.02 A"/>
    <property type="chains" value="B/D=1-795"/>
</dbReference>
<dbReference type="PDB" id="6OZ5">
    <property type="method" value="X-ray"/>
    <property type="resolution" value="2.50 A"/>
    <property type="chains" value="B/D=1-795"/>
</dbReference>
<dbReference type="PDB" id="6P24">
    <property type="method" value="X-ray"/>
    <property type="resolution" value="2.12 A"/>
    <property type="chains" value="B/D=1-795"/>
</dbReference>
<dbReference type="PDB" id="6P26">
    <property type="method" value="X-ray"/>
    <property type="resolution" value="3.16 A"/>
    <property type="chains" value="B/D=1-795"/>
</dbReference>
<dbReference type="PDBsum" id="3PCO"/>
<dbReference type="PDBsum" id="6OZ5"/>
<dbReference type="PDBsum" id="6P24"/>
<dbReference type="PDBsum" id="6P26"/>
<dbReference type="SMR" id="P07395"/>
<dbReference type="BioGRID" id="4262088">
    <property type="interactions" value="224"/>
</dbReference>
<dbReference type="BioGRID" id="849758">
    <property type="interactions" value="4"/>
</dbReference>
<dbReference type="ComplexPortal" id="CPX-5222">
    <property type="entry name" value="Phenylalanyl-tRNA synthetase complex"/>
</dbReference>
<dbReference type="DIP" id="DIP-6879N"/>
<dbReference type="FunCoup" id="P07395">
    <property type="interactions" value="617"/>
</dbReference>
<dbReference type="IntAct" id="P07395">
    <property type="interactions" value="12"/>
</dbReference>
<dbReference type="STRING" id="511145.b1713"/>
<dbReference type="BindingDB" id="P07395"/>
<dbReference type="DrugCentral" id="P07395"/>
<dbReference type="jPOST" id="P07395"/>
<dbReference type="PaxDb" id="511145-b1713"/>
<dbReference type="EnsemblBacteria" id="AAC74783">
    <property type="protein sequence ID" value="AAC74783"/>
    <property type="gene ID" value="b1713"/>
</dbReference>
<dbReference type="GeneID" id="945382"/>
<dbReference type="KEGG" id="ecj:JW1703"/>
<dbReference type="KEGG" id="eco:b1713"/>
<dbReference type="KEGG" id="ecoc:C3026_09805"/>
<dbReference type="PATRIC" id="fig|1411691.4.peg.544"/>
<dbReference type="EchoBASE" id="EB0704"/>
<dbReference type="eggNOG" id="COG0072">
    <property type="taxonomic scope" value="Bacteria"/>
</dbReference>
<dbReference type="eggNOG" id="COG0073">
    <property type="taxonomic scope" value="Bacteria"/>
</dbReference>
<dbReference type="HOGENOM" id="CLU_016891_0_0_6"/>
<dbReference type="InParanoid" id="P07395"/>
<dbReference type="OMA" id="PSPLWMQ"/>
<dbReference type="OrthoDB" id="9805455at2"/>
<dbReference type="PhylomeDB" id="P07395"/>
<dbReference type="BioCyc" id="EcoCyc:PHET-MONOMER"/>
<dbReference type="BioCyc" id="MetaCyc:PHET-MONOMER"/>
<dbReference type="SABIO-RK" id="P07395"/>
<dbReference type="EvolutionaryTrace" id="P07395"/>
<dbReference type="PRO" id="PR:P07395"/>
<dbReference type="Proteomes" id="UP000000625">
    <property type="component" value="Chromosome"/>
</dbReference>
<dbReference type="GO" id="GO:0005829">
    <property type="term" value="C:cytosol"/>
    <property type="evidence" value="ECO:0000314"/>
    <property type="project" value="EcoCyc"/>
</dbReference>
<dbReference type="GO" id="GO:0016020">
    <property type="term" value="C:membrane"/>
    <property type="evidence" value="ECO:0007005"/>
    <property type="project" value="UniProtKB"/>
</dbReference>
<dbReference type="GO" id="GO:0009328">
    <property type="term" value="C:phenylalanine-tRNA ligase complex"/>
    <property type="evidence" value="ECO:0000314"/>
    <property type="project" value="EcoCyc"/>
</dbReference>
<dbReference type="GO" id="GO:0005524">
    <property type="term" value="F:ATP binding"/>
    <property type="evidence" value="ECO:0007669"/>
    <property type="project" value="UniProtKB-UniRule"/>
</dbReference>
<dbReference type="GO" id="GO:0042802">
    <property type="term" value="F:identical protein binding"/>
    <property type="evidence" value="ECO:0000353"/>
    <property type="project" value="IntAct"/>
</dbReference>
<dbReference type="GO" id="GO:0000287">
    <property type="term" value="F:magnesium ion binding"/>
    <property type="evidence" value="ECO:0007669"/>
    <property type="project" value="UniProtKB-UniRule"/>
</dbReference>
<dbReference type="GO" id="GO:0004826">
    <property type="term" value="F:phenylalanine-tRNA ligase activity"/>
    <property type="evidence" value="ECO:0007669"/>
    <property type="project" value="UniProtKB-UniRule"/>
</dbReference>
<dbReference type="GO" id="GO:0000049">
    <property type="term" value="F:tRNA binding"/>
    <property type="evidence" value="ECO:0007669"/>
    <property type="project" value="UniProtKB-KW"/>
</dbReference>
<dbReference type="GO" id="GO:0006432">
    <property type="term" value="P:phenylalanyl-tRNA aminoacylation"/>
    <property type="evidence" value="ECO:0000314"/>
    <property type="project" value="ComplexPortal"/>
</dbReference>
<dbReference type="CDD" id="cd00769">
    <property type="entry name" value="PheRS_beta_core"/>
    <property type="match status" value="1"/>
</dbReference>
<dbReference type="CDD" id="cd02796">
    <property type="entry name" value="tRNA_bind_bactPheRS"/>
    <property type="match status" value="1"/>
</dbReference>
<dbReference type="FunFam" id="2.40.50.140:FF:000045">
    <property type="entry name" value="Phenylalanine--tRNA ligase beta subunit"/>
    <property type="match status" value="1"/>
</dbReference>
<dbReference type="FunFam" id="3.30.56.10:FF:000002">
    <property type="entry name" value="Phenylalanine--tRNA ligase beta subunit"/>
    <property type="match status" value="1"/>
</dbReference>
<dbReference type="FunFam" id="3.30.70.380:FF:000001">
    <property type="entry name" value="Phenylalanine--tRNA ligase beta subunit"/>
    <property type="match status" value="1"/>
</dbReference>
<dbReference type="FunFam" id="3.30.930.10:FF:000022">
    <property type="entry name" value="Phenylalanine--tRNA ligase beta subunit"/>
    <property type="match status" value="1"/>
</dbReference>
<dbReference type="FunFam" id="3.50.40.10:FF:000001">
    <property type="entry name" value="Phenylalanine--tRNA ligase beta subunit"/>
    <property type="match status" value="1"/>
</dbReference>
<dbReference type="Gene3D" id="3.30.56.10">
    <property type="match status" value="2"/>
</dbReference>
<dbReference type="Gene3D" id="3.30.930.10">
    <property type="entry name" value="Bira Bifunctional Protein, Domain 2"/>
    <property type="match status" value="1"/>
</dbReference>
<dbReference type="Gene3D" id="3.30.70.380">
    <property type="entry name" value="Ferrodoxin-fold anticodon-binding domain"/>
    <property type="match status" value="1"/>
</dbReference>
<dbReference type="Gene3D" id="2.40.50.140">
    <property type="entry name" value="Nucleic acid-binding proteins"/>
    <property type="match status" value="1"/>
</dbReference>
<dbReference type="Gene3D" id="3.50.40.10">
    <property type="entry name" value="Phenylalanyl-trna Synthetase, Chain B, domain 3"/>
    <property type="match status" value="1"/>
</dbReference>
<dbReference type="HAMAP" id="MF_00283">
    <property type="entry name" value="Phe_tRNA_synth_beta1"/>
    <property type="match status" value="1"/>
</dbReference>
<dbReference type="InterPro" id="IPR045864">
    <property type="entry name" value="aa-tRNA-synth_II/BPL/LPL"/>
</dbReference>
<dbReference type="InterPro" id="IPR005146">
    <property type="entry name" value="B3/B4_tRNA-bd"/>
</dbReference>
<dbReference type="InterPro" id="IPR009061">
    <property type="entry name" value="DNA-bd_dom_put_sf"/>
</dbReference>
<dbReference type="InterPro" id="IPR005121">
    <property type="entry name" value="Fdx_antiC-bd"/>
</dbReference>
<dbReference type="InterPro" id="IPR036690">
    <property type="entry name" value="Fdx_antiC-bd_sf"/>
</dbReference>
<dbReference type="InterPro" id="IPR012340">
    <property type="entry name" value="NA-bd_OB-fold"/>
</dbReference>
<dbReference type="InterPro" id="IPR045060">
    <property type="entry name" value="Phe-tRNA-ligase_IIc_bsu"/>
</dbReference>
<dbReference type="InterPro" id="IPR004532">
    <property type="entry name" value="Phe-tRNA-ligase_IIc_bsu_bact"/>
</dbReference>
<dbReference type="InterPro" id="IPR020825">
    <property type="entry name" value="Phe-tRNA_synthase-like_B3/B4"/>
</dbReference>
<dbReference type="InterPro" id="IPR041616">
    <property type="entry name" value="PheRS_beta_core"/>
</dbReference>
<dbReference type="InterPro" id="IPR002547">
    <property type="entry name" value="tRNA-bd_dom"/>
</dbReference>
<dbReference type="InterPro" id="IPR033714">
    <property type="entry name" value="tRNA_bind_bactPheRS"/>
</dbReference>
<dbReference type="InterPro" id="IPR005147">
    <property type="entry name" value="tRNA_synthase_B5-dom"/>
</dbReference>
<dbReference type="NCBIfam" id="TIGR00472">
    <property type="entry name" value="pheT_bact"/>
    <property type="match status" value="1"/>
</dbReference>
<dbReference type="NCBIfam" id="NF045760">
    <property type="entry name" value="YtpR"/>
    <property type="match status" value="1"/>
</dbReference>
<dbReference type="PANTHER" id="PTHR10947:SF0">
    <property type="entry name" value="PHENYLALANINE--TRNA LIGASE BETA SUBUNIT"/>
    <property type="match status" value="1"/>
</dbReference>
<dbReference type="PANTHER" id="PTHR10947">
    <property type="entry name" value="PHENYLALANYL-TRNA SYNTHETASE BETA CHAIN AND LEUCINE-RICH REPEAT-CONTAINING PROTEIN 47"/>
    <property type="match status" value="1"/>
</dbReference>
<dbReference type="Pfam" id="PF03483">
    <property type="entry name" value="B3_4"/>
    <property type="match status" value="1"/>
</dbReference>
<dbReference type="Pfam" id="PF03484">
    <property type="entry name" value="B5"/>
    <property type="match status" value="1"/>
</dbReference>
<dbReference type="Pfam" id="PF03147">
    <property type="entry name" value="FDX-ACB"/>
    <property type="match status" value="1"/>
</dbReference>
<dbReference type="Pfam" id="PF01588">
    <property type="entry name" value="tRNA_bind"/>
    <property type="match status" value="1"/>
</dbReference>
<dbReference type="Pfam" id="PF17759">
    <property type="entry name" value="tRNA_synthFbeta"/>
    <property type="match status" value="1"/>
</dbReference>
<dbReference type="SMART" id="SM00873">
    <property type="entry name" value="B3_4"/>
    <property type="match status" value="1"/>
</dbReference>
<dbReference type="SMART" id="SM00874">
    <property type="entry name" value="B5"/>
    <property type="match status" value="1"/>
</dbReference>
<dbReference type="SMART" id="SM00896">
    <property type="entry name" value="FDX-ACB"/>
    <property type="match status" value="1"/>
</dbReference>
<dbReference type="SUPFAM" id="SSF54991">
    <property type="entry name" value="Anticodon-binding domain of PheRS"/>
    <property type="match status" value="1"/>
</dbReference>
<dbReference type="SUPFAM" id="SSF55681">
    <property type="entry name" value="Class II aaRS and biotin synthetases"/>
    <property type="match status" value="1"/>
</dbReference>
<dbReference type="SUPFAM" id="SSF50249">
    <property type="entry name" value="Nucleic acid-binding proteins"/>
    <property type="match status" value="1"/>
</dbReference>
<dbReference type="SUPFAM" id="SSF56037">
    <property type="entry name" value="PheT/TilS domain"/>
    <property type="match status" value="1"/>
</dbReference>
<dbReference type="SUPFAM" id="SSF46955">
    <property type="entry name" value="Putative DNA-binding domain"/>
    <property type="match status" value="1"/>
</dbReference>
<dbReference type="PROSITE" id="PS51483">
    <property type="entry name" value="B5"/>
    <property type="match status" value="1"/>
</dbReference>
<dbReference type="PROSITE" id="PS51447">
    <property type="entry name" value="FDX_ACB"/>
    <property type="match status" value="1"/>
</dbReference>
<dbReference type="PROSITE" id="PS50886">
    <property type="entry name" value="TRBD"/>
    <property type="match status" value="1"/>
</dbReference>
<sequence>MKFSELWLREWVNPAIDSDALANQITMAGLEVDGVEPVAGSFHGVVVGEVVECAQHPNADKLRVTKVNVGGDRLLDIVCGAPNCRQGLRVAVATIGAVLPGDFKIKAAKLRGEPSEGMLCSFSELGISDDHSGIIELPADAPIGTDIREYLKLDDNTIEISVTPNRADCLGIIGVARDVAVLNQLPLVQPEIVPVGATIDDTLPITVEAPEACPRYLGRVVKGINVKAPTPLWMKEKLRRCGIRSIDAVVDVTNYVLLELGQPMHAFDKDRIEGGIVVRMAKEGETLVLLDGTEAKLNADTLVIADHNKALAMGGIFGGEHSGVNDETQNVLLECAFFSPLSITGRARRHGLHTDASHRYERGVDPALQHKAMERATRLLIDICGGEAGPVIDITNEATLPKRATITLRRSKLDRLIGHHIADEQVTDILRRLGCEVTEGKDEWQAVAPSWRFDMEIEEDLVEEVARVYGYNNIPDEPVQASLIMGTHREADLSLKRVKTLLNDKGYQEVITYSFVDPKVQQMIHPGVEALLLPSPISVEMSAMRLSLWTGLLATVVYNQNRQQNRVRIFESGLRFVPDTQAPLGIRQDLMLAGVICGNRYEEHWNLAKETVDFYDLKGDLESVLDLTGKLNEVEFRAEANPALHPGQSAAIYLKGERIGFVGVVHPELERKLDLNGRTLVFELEWNKLADRVVPQAREISRFPANRRDIAVVVAENVPAADILSECKKVGVNQVVGVNLFDVYRGKGVAEGYKSLAISLILQDTSRTLEEEEIAATVAKCVEALKERFQASLRD</sequence>
<feature type="chain" id="PRO_0000126880" description="Phenylalanine--tRNA ligase beta subunit">
    <location>
        <begin position="1"/>
        <end position="795"/>
    </location>
</feature>
<feature type="domain" description="tRNA-binding">
    <location>
        <begin position="39"/>
        <end position="148"/>
    </location>
</feature>
<feature type="domain" description="B5">
    <location>
        <begin position="401"/>
        <end position="476"/>
    </location>
</feature>
<feature type="domain" description="FDX-ACB">
    <location>
        <begin position="701"/>
        <end position="794"/>
    </location>
</feature>
<feature type="binding site" evidence="1">
    <location>
        <position position="454"/>
    </location>
    <ligand>
        <name>Mg(2+)</name>
        <dbReference type="ChEBI" id="CHEBI:18420"/>
        <note>shared with alpha subunit</note>
    </ligand>
</feature>
<feature type="binding site" evidence="1">
    <location>
        <position position="460"/>
    </location>
    <ligand>
        <name>Mg(2+)</name>
        <dbReference type="ChEBI" id="CHEBI:18420"/>
        <note>shared with alpha subunit</note>
    </ligand>
</feature>
<feature type="binding site" evidence="1">
    <location>
        <position position="463"/>
    </location>
    <ligand>
        <name>Mg(2+)</name>
        <dbReference type="ChEBI" id="CHEBI:18420"/>
        <note>shared with alpha subunit</note>
    </ligand>
</feature>
<feature type="binding site" evidence="1">
    <location>
        <position position="464"/>
    </location>
    <ligand>
        <name>Mg(2+)</name>
        <dbReference type="ChEBI" id="CHEBI:18420"/>
        <note>shared with alpha subunit</note>
    </ligand>
</feature>
<feature type="sequence conflict" description="In Ref. 1; CAA23565." evidence="2" ref="1">
    <original>A</original>
    <variation>T</variation>
    <location>
        <position position="93"/>
    </location>
</feature>
<feature type="sequence conflict" description="In Ref. 1; CAA23565." evidence="2" ref="1">
    <original>AP</original>
    <variation>VR</variation>
    <location>
        <begin position="141"/>
        <end position="142"/>
    </location>
</feature>
<feature type="sequence conflict" description="In Ref. 1; CAA23565." evidence="2" ref="1">
    <original>PLVQ</original>
    <variation>AAGN</variation>
    <location>
        <begin position="186"/>
        <end position="189"/>
    </location>
</feature>
<feature type="sequence conflict" description="In Ref. 1; CAA23565." evidence="2" ref="1">
    <original>A</original>
    <variation>R</variation>
    <location>
        <position position="481"/>
    </location>
</feature>
<feature type="sequence conflict" description="In Ref. 1; CAA23565." evidence="2" ref="1">
    <original>R</original>
    <variation>G</variation>
    <location>
        <position position="698"/>
    </location>
</feature>
<feature type="strand" evidence="4">
    <location>
        <begin position="2"/>
        <end position="4"/>
    </location>
</feature>
<feature type="helix" evidence="4">
    <location>
        <begin position="5"/>
        <end position="9"/>
    </location>
</feature>
<feature type="helix" evidence="4">
    <location>
        <begin position="18"/>
        <end position="27"/>
    </location>
</feature>
<feature type="strand" evidence="4">
    <location>
        <begin position="32"/>
        <end position="39"/>
    </location>
</feature>
<feature type="strand" evidence="4">
    <location>
        <begin position="43"/>
        <end position="55"/>
    </location>
</feature>
<feature type="strand" evidence="4">
    <location>
        <begin position="63"/>
        <end position="68"/>
    </location>
</feature>
<feature type="strand" evidence="4">
    <location>
        <begin position="70"/>
        <end position="73"/>
    </location>
</feature>
<feature type="strand" evidence="4">
    <location>
        <begin position="75"/>
        <end position="79"/>
    </location>
</feature>
<feature type="strand" evidence="4">
    <location>
        <begin position="89"/>
        <end position="99"/>
    </location>
</feature>
<feature type="turn" evidence="4">
    <location>
        <begin position="100"/>
        <end position="102"/>
    </location>
</feature>
<feature type="strand" evidence="4">
    <location>
        <begin position="108"/>
        <end position="110"/>
    </location>
</feature>
<feature type="strand" evidence="4">
    <location>
        <begin position="113"/>
        <end position="119"/>
    </location>
</feature>
<feature type="turn" evidence="4">
    <location>
        <begin position="122"/>
        <end position="126"/>
    </location>
</feature>
<feature type="helix" evidence="4">
    <location>
        <begin position="147"/>
        <end position="150"/>
    </location>
</feature>
<feature type="strand" evidence="4">
    <location>
        <begin position="156"/>
        <end position="160"/>
    </location>
</feature>
<feature type="helix" evidence="4">
    <location>
        <begin position="167"/>
        <end position="169"/>
    </location>
</feature>
<feature type="helix" evidence="4">
    <location>
        <begin position="172"/>
        <end position="182"/>
    </location>
</feature>
<feature type="strand" evidence="4">
    <location>
        <begin position="205"/>
        <end position="208"/>
    </location>
</feature>
<feature type="turn" evidence="4">
    <location>
        <begin position="210"/>
        <end position="212"/>
    </location>
</feature>
<feature type="strand" evidence="4">
    <location>
        <begin position="214"/>
        <end position="223"/>
    </location>
</feature>
<feature type="helix" evidence="4">
    <location>
        <begin position="232"/>
        <end position="239"/>
    </location>
</feature>
<feature type="turn" evidence="4">
    <location>
        <begin position="240"/>
        <end position="242"/>
    </location>
</feature>
<feature type="helix" evidence="4">
    <location>
        <begin position="248"/>
        <end position="260"/>
    </location>
</feature>
<feature type="strand" evidence="4">
    <location>
        <begin position="265"/>
        <end position="268"/>
    </location>
</feature>
<feature type="helix" evidence="4">
    <location>
        <begin position="269"/>
        <end position="271"/>
    </location>
</feature>
<feature type="strand" evidence="4">
    <location>
        <begin position="276"/>
        <end position="280"/>
    </location>
</feature>
<feature type="strand" evidence="4">
    <location>
        <begin position="286"/>
        <end position="289"/>
    </location>
</feature>
<feature type="turn" evidence="3">
    <location>
        <begin position="290"/>
        <end position="292"/>
    </location>
</feature>
<feature type="strand" evidence="4">
    <location>
        <begin position="294"/>
        <end position="296"/>
    </location>
</feature>
<feature type="strand" evidence="4">
    <location>
        <begin position="301"/>
        <end position="313"/>
    </location>
</feature>
<feature type="turn" evidence="4">
    <location>
        <begin position="314"/>
        <end position="316"/>
    </location>
</feature>
<feature type="strand" evidence="4">
    <location>
        <begin position="317"/>
        <end position="323"/>
    </location>
</feature>
<feature type="strand" evidence="4">
    <location>
        <begin position="330"/>
        <end position="337"/>
    </location>
</feature>
<feature type="helix" evidence="4">
    <location>
        <begin position="340"/>
        <end position="343"/>
    </location>
</feature>
<feature type="helix" evidence="4">
    <location>
        <begin position="346"/>
        <end position="349"/>
    </location>
</feature>
<feature type="helix" evidence="4">
    <location>
        <begin position="355"/>
        <end position="360"/>
    </location>
</feature>
<feature type="helix" evidence="4">
    <location>
        <begin position="369"/>
        <end position="384"/>
    </location>
</feature>
<feature type="strand" evidence="4">
    <location>
        <begin position="392"/>
        <end position="395"/>
    </location>
</feature>
<feature type="turn" evidence="4">
    <location>
        <begin position="397"/>
        <end position="399"/>
    </location>
</feature>
<feature type="strand" evidence="4">
    <location>
        <begin position="405"/>
        <end position="409"/>
    </location>
</feature>
<feature type="helix" evidence="4">
    <location>
        <begin position="410"/>
        <end position="417"/>
    </location>
</feature>
<feature type="helix" evidence="4">
    <location>
        <begin position="423"/>
        <end position="432"/>
    </location>
</feature>
<feature type="strand" evidence="4">
    <location>
        <begin position="436"/>
        <end position="440"/>
    </location>
</feature>
<feature type="strand" evidence="4">
    <location>
        <begin position="443"/>
        <end position="447"/>
    </location>
</feature>
<feature type="helix" evidence="4">
    <location>
        <begin position="458"/>
        <end position="469"/>
    </location>
</feature>
<feature type="helix" evidence="4">
    <location>
        <begin position="471"/>
        <end position="473"/>
    </location>
</feature>
<feature type="strand" evidence="4">
    <location>
        <begin position="480"/>
        <end position="483"/>
    </location>
</feature>
<feature type="helix" evidence="4">
    <location>
        <begin position="495"/>
        <end position="503"/>
    </location>
</feature>
<feature type="turn" evidence="4">
    <location>
        <begin position="504"/>
        <end position="506"/>
    </location>
</feature>
<feature type="strand" evidence="4">
    <location>
        <begin position="514"/>
        <end position="516"/>
    </location>
</feature>
<feature type="helix" evidence="4">
    <location>
        <begin position="518"/>
        <end position="524"/>
    </location>
</feature>
<feature type="strand" evidence="3">
    <location>
        <begin position="525"/>
        <end position="527"/>
    </location>
</feature>
<feature type="helix" evidence="4">
    <location>
        <begin position="539"/>
        <end position="541"/>
    </location>
</feature>
<feature type="strand" evidence="4">
    <location>
        <begin position="546"/>
        <end position="548"/>
    </location>
</feature>
<feature type="helix" evidence="4">
    <location>
        <begin position="549"/>
        <end position="560"/>
    </location>
</feature>
<feature type="turn" evidence="4">
    <location>
        <begin position="561"/>
        <end position="563"/>
    </location>
</feature>
<feature type="strand" evidence="4">
    <location>
        <begin position="568"/>
        <end position="578"/>
    </location>
</feature>
<feature type="helix" evidence="4">
    <location>
        <begin position="583"/>
        <end position="585"/>
    </location>
</feature>
<feature type="strand" evidence="4">
    <location>
        <begin position="586"/>
        <end position="603"/>
    </location>
</feature>
<feature type="strand" evidence="4">
    <location>
        <begin position="605"/>
        <end position="607"/>
    </location>
</feature>
<feature type="helix" evidence="4">
    <location>
        <begin position="614"/>
        <end position="626"/>
    </location>
</feature>
<feature type="turn" evidence="4">
    <location>
        <begin position="627"/>
        <end position="629"/>
    </location>
</feature>
<feature type="helix" evidence="4">
    <location>
        <begin position="631"/>
        <end position="633"/>
    </location>
</feature>
<feature type="strand" evidence="4">
    <location>
        <begin position="634"/>
        <end position="638"/>
    </location>
</feature>
<feature type="strand" evidence="4">
    <location>
        <begin position="644"/>
        <end position="654"/>
    </location>
</feature>
<feature type="strand" evidence="4">
    <location>
        <begin position="657"/>
        <end position="665"/>
    </location>
</feature>
<feature type="helix" evidence="4">
    <location>
        <begin position="667"/>
        <end position="672"/>
    </location>
</feature>
<feature type="strand" evidence="4">
    <location>
        <begin position="679"/>
        <end position="685"/>
    </location>
</feature>
<feature type="helix" evidence="4">
    <location>
        <begin position="686"/>
        <end position="689"/>
    </location>
</feature>
<feature type="strand" evidence="4">
    <location>
        <begin position="706"/>
        <end position="715"/>
    </location>
</feature>
<feature type="helix" evidence="4">
    <location>
        <begin position="720"/>
        <end position="729"/>
    </location>
</feature>
<feature type="strand" evidence="4">
    <location>
        <begin position="733"/>
        <end position="744"/>
    </location>
</feature>
<feature type="strand" evidence="4">
    <location>
        <begin position="753"/>
        <end position="762"/>
    </location>
</feature>
<feature type="strand" evidence="4">
    <location>
        <begin position="765"/>
        <end position="767"/>
    </location>
</feature>
<feature type="helix" evidence="4">
    <location>
        <begin position="771"/>
        <end position="788"/>
    </location>
</feature>
<gene>
    <name type="primary">pheT</name>
    <name type="ordered locus">b1713</name>
    <name type="ordered locus">JW1703</name>
</gene>
<proteinExistence type="evidence at protein level"/>
<protein>
    <recommendedName>
        <fullName>Phenylalanine--tRNA ligase beta subunit</fullName>
        <ecNumber>6.1.1.20</ecNumber>
    </recommendedName>
    <alternativeName>
        <fullName>Phenylalanyl-tRNA synthetase beta subunit</fullName>
        <shortName>PheRS</shortName>
    </alternativeName>
</protein>
<name>SYFB_ECOLI</name>
<organism>
    <name type="scientific">Escherichia coli (strain K12)</name>
    <dbReference type="NCBI Taxonomy" id="83333"/>
    <lineage>
        <taxon>Bacteria</taxon>
        <taxon>Pseudomonadati</taxon>
        <taxon>Pseudomonadota</taxon>
        <taxon>Gammaproteobacteria</taxon>
        <taxon>Enterobacterales</taxon>
        <taxon>Enterobacteriaceae</taxon>
        <taxon>Escherichia</taxon>
    </lineage>
</organism>
<accession>P07395</accession>
<accession>Q59407</accession>
<comment type="catalytic activity">
    <reaction>
        <text>tRNA(Phe) + L-phenylalanine + ATP = L-phenylalanyl-tRNA(Phe) + AMP + diphosphate + H(+)</text>
        <dbReference type="Rhea" id="RHEA:19413"/>
        <dbReference type="Rhea" id="RHEA-COMP:9668"/>
        <dbReference type="Rhea" id="RHEA-COMP:9699"/>
        <dbReference type="ChEBI" id="CHEBI:15378"/>
        <dbReference type="ChEBI" id="CHEBI:30616"/>
        <dbReference type="ChEBI" id="CHEBI:33019"/>
        <dbReference type="ChEBI" id="CHEBI:58095"/>
        <dbReference type="ChEBI" id="CHEBI:78442"/>
        <dbReference type="ChEBI" id="CHEBI:78531"/>
        <dbReference type="ChEBI" id="CHEBI:456215"/>
        <dbReference type="EC" id="6.1.1.20"/>
    </reaction>
</comment>
<comment type="cofactor">
    <cofactor evidence="1">
        <name>Mg(2+)</name>
        <dbReference type="ChEBI" id="CHEBI:18420"/>
    </cofactor>
    <text evidence="1">Binds 2 magnesium ions per tetramer.</text>
</comment>
<comment type="subunit">
    <text>Tetramer of two alpha and two beta subunits.</text>
</comment>
<comment type="interaction">
    <interactant intactId="EBI-555713">
        <id>P07395</id>
    </interactant>
    <interactant intactId="EBI-555775">
        <id>P32715</id>
        <label>mdtO</label>
    </interactant>
    <organismsDiffer>false</organismsDiffer>
    <experiments>4</experiments>
</comment>
<comment type="interaction">
    <interactant intactId="EBI-555713">
        <id>P07395</id>
    </interactant>
    <interactant intactId="EBI-555676">
        <id>P08312</id>
        <label>pheS</label>
    </interactant>
    <organismsDiffer>false</organismsDiffer>
    <experiments>9</experiments>
</comment>
<comment type="interaction">
    <interactant intactId="EBI-555713">
        <id>P07395</id>
    </interactant>
    <interactant intactId="EBI-555713">
        <id>P07395</id>
        <label>pheT</label>
    </interactant>
    <organismsDiffer>false</organismsDiffer>
    <experiments>2</experiments>
</comment>
<comment type="interaction">
    <interactant intactId="EBI-555713">
        <id>P07395</id>
    </interactant>
    <interactant intactId="EBI-555724">
        <id>P0AG90</id>
        <label>secD</label>
    </interactant>
    <organismsDiffer>false</organismsDiffer>
    <experiments>4</experiments>
</comment>
<comment type="subcellular location">
    <subcellularLocation>
        <location>Cytoplasm</location>
    </subcellularLocation>
</comment>
<comment type="similarity">
    <text evidence="2">Belongs to the phenylalanyl-tRNA synthetase beta subunit family. Type 1 subfamily.</text>
</comment>
<evidence type="ECO:0000250" key="1"/>
<evidence type="ECO:0000305" key="2"/>
<evidence type="ECO:0007829" key="3">
    <source>
        <dbReference type="PDB" id="3PCO"/>
    </source>
</evidence>
<evidence type="ECO:0007829" key="4">
    <source>
        <dbReference type="PDB" id="6P24"/>
    </source>
</evidence>
<keyword id="KW-0002">3D-structure</keyword>
<keyword id="KW-0030">Aminoacyl-tRNA synthetase</keyword>
<keyword id="KW-0067">ATP-binding</keyword>
<keyword id="KW-0963">Cytoplasm</keyword>
<keyword id="KW-0436">Ligase</keyword>
<keyword id="KW-0460">Magnesium</keyword>
<keyword id="KW-0479">Metal-binding</keyword>
<keyword id="KW-0547">Nucleotide-binding</keyword>
<keyword id="KW-0648">Protein biosynthesis</keyword>
<keyword id="KW-1185">Reference proteome</keyword>
<keyword id="KW-0694">RNA-binding</keyword>
<keyword id="KW-0820">tRNA-binding</keyword>
<reference key="1">
    <citation type="journal article" date="1985" name="J. Bacteriol.">
        <title>Sequence of the Escherichia coli pheST operon and identification of the himA gene.</title>
        <authorList>
            <person name="Mechulman Y."/>
            <person name="Fayat G."/>
            <person name="Blanquet S."/>
        </authorList>
    </citation>
    <scope>NUCLEOTIDE SEQUENCE [GENOMIC DNA]</scope>
</reference>
<reference key="2">
    <citation type="submission" date="1986-11" db="EMBL/GenBank/DDBJ databases">
        <authorList>
            <person name="Miller H.I."/>
        </authorList>
    </citation>
    <scope>NUCLEOTIDE SEQUENCE [GENOMIC DNA]</scope>
</reference>
<reference key="3">
    <citation type="journal article" date="1996" name="DNA Res.">
        <title>A 570-kb DNA sequence of the Escherichia coli K-12 genome corresponding to the 28.0-40.1 min region on the linkage map.</title>
        <authorList>
            <person name="Aiba H."/>
            <person name="Baba T."/>
            <person name="Fujita K."/>
            <person name="Hayashi K."/>
            <person name="Inada T."/>
            <person name="Isono K."/>
            <person name="Itoh T."/>
            <person name="Kasai H."/>
            <person name="Kashimoto K."/>
            <person name="Kimura S."/>
            <person name="Kitakawa M."/>
            <person name="Kitagawa M."/>
            <person name="Makino K."/>
            <person name="Miki T."/>
            <person name="Mizobuchi K."/>
            <person name="Mori H."/>
            <person name="Mori T."/>
            <person name="Motomura K."/>
            <person name="Nakade S."/>
            <person name="Nakamura Y."/>
            <person name="Nashimoto H."/>
            <person name="Nishio Y."/>
            <person name="Oshima T."/>
            <person name="Saito N."/>
            <person name="Sampei G."/>
            <person name="Seki Y."/>
            <person name="Sivasundaram S."/>
            <person name="Tagami H."/>
            <person name="Takeda J."/>
            <person name="Takemoto K."/>
            <person name="Takeuchi Y."/>
            <person name="Wada C."/>
            <person name="Yamamoto Y."/>
            <person name="Horiuchi T."/>
        </authorList>
    </citation>
    <scope>NUCLEOTIDE SEQUENCE [LARGE SCALE GENOMIC DNA]</scope>
    <source>
        <strain>K12 / W3110 / ATCC 27325 / DSM 5911</strain>
    </source>
</reference>
<reference key="4">
    <citation type="journal article" date="1997" name="Science">
        <title>The complete genome sequence of Escherichia coli K-12.</title>
        <authorList>
            <person name="Blattner F.R."/>
            <person name="Plunkett G. III"/>
            <person name="Bloch C.A."/>
            <person name="Perna N.T."/>
            <person name="Burland V."/>
            <person name="Riley M."/>
            <person name="Collado-Vides J."/>
            <person name="Glasner J.D."/>
            <person name="Rode C.K."/>
            <person name="Mayhew G.F."/>
            <person name="Gregor J."/>
            <person name="Davis N.W."/>
            <person name="Kirkpatrick H.A."/>
            <person name="Goeden M.A."/>
            <person name="Rose D.J."/>
            <person name="Mau B."/>
            <person name="Shao Y."/>
        </authorList>
    </citation>
    <scope>NUCLEOTIDE SEQUENCE [LARGE SCALE GENOMIC DNA]</scope>
    <source>
        <strain>K12 / MG1655 / ATCC 47076</strain>
    </source>
</reference>
<reference key="5">
    <citation type="journal article" date="2006" name="Mol. Syst. Biol.">
        <title>Highly accurate genome sequences of Escherichia coli K-12 strains MG1655 and W3110.</title>
        <authorList>
            <person name="Hayashi K."/>
            <person name="Morooka N."/>
            <person name="Yamamoto Y."/>
            <person name="Fujita K."/>
            <person name="Isono K."/>
            <person name="Choi S."/>
            <person name="Ohtsubo E."/>
            <person name="Baba T."/>
            <person name="Wanner B.L."/>
            <person name="Mori H."/>
            <person name="Horiuchi T."/>
        </authorList>
    </citation>
    <scope>NUCLEOTIDE SEQUENCE [LARGE SCALE GENOMIC DNA]</scope>
    <source>
        <strain>K12 / W3110 / ATCC 27325 / DSM 5911</strain>
    </source>
</reference>
<reference key="6">
    <citation type="journal article" date="1997" name="Electrophoresis">
        <title>Escherichia coli proteome analysis using the gene-protein database.</title>
        <authorList>
            <person name="VanBogelen R.A."/>
            <person name="Abshire K.Z."/>
            <person name="Moldover B."/>
            <person name="Olson E.R."/>
            <person name="Neidhardt F.C."/>
        </authorList>
    </citation>
    <scope>IDENTIFICATION BY 2D-GEL</scope>
</reference>